<sequence length="457" mass="49440">MQKYTSEARQLLALAIPVILAQVAQTAMGFVDTVMAGGYSATDMAAVAIGTSIWLPAILFGHGLLLALTPVIAQLNGSGRRERIAHQVRQGFWLAGFVSVLVMIVLWNAGYIIRSMHNIDPALADKAVGYLRALLWGAPGYLFFQVARNQCEGLAKTKPGMVMGFLGLLVNIPVNYIFIYGHFGMPELGGIGCGVATAAVYWVMFIAMLSYIKHARSMRDIRNEKGFGKPDSVVMKRLIQLGLPIALALFFEVTLFAVVALLVSPLGIVDVAGHQIALNFSSLMFVLPMSLAAAVTIRVGYRLGQGSTLDAQTAARTGLGVGICMAVVTAIFTVTLRKHIALLYNDNPEVVALAAQLMLLAAVYQISDSIQIIGSGILRGYKDTRSIFFITFTAYWVLGLPSGYILALTDLVVDRMGPAGFWMGFIIGLTSAAVLMMLRMRYLQRQPSAIILQRAAR</sequence>
<organism>
    <name type="scientific">Salmonella choleraesuis (strain SC-B67)</name>
    <dbReference type="NCBI Taxonomy" id="321314"/>
    <lineage>
        <taxon>Bacteria</taxon>
        <taxon>Pseudomonadati</taxon>
        <taxon>Pseudomonadota</taxon>
        <taxon>Gammaproteobacteria</taxon>
        <taxon>Enterobacterales</taxon>
        <taxon>Enterobacteriaceae</taxon>
        <taxon>Salmonella</taxon>
    </lineage>
</organism>
<keyword id="KW-0050">Antiport</keyword>
<keyword id="KW-0997">Cell inner membrane</keyword>
<keyword id="KW-1003">Cell membrane</keyword>
<keyword id="KW-0406">Ion transport</keyword>
<keyword id="KW-0472">Membrane</keyword>
<keyword id="KW-0915">Sodium</keyword>
<keyword id="KW-0739">Sodium transport</keyword>
<keyword id="KW-0812">Transmembrane</keyword>
<keyword id="KW-1133">Transmembrane helix</keyword>
<keyword id="KW-0813">Transport</keyword>
<protein>
    <recommendedName>
        <fullName>Multidrug resistance protein MdtK</fullName>
    </recommendedName>
    <alternativeName>
        <fullName>Multidrug-efflux transporter</fullName>
    </alternativeName>
</protein>
<gene>
    <name type="primary">mdtK</name>
    <name type="ordered locus">SCH_1444</name>
</gene>
<feature type="chain" id="PRO_0000164187" description="Multidrug resistance protein MdtK">
    <location>
        <begin position="1"/>
        <end position="457"/>
    </location>
</feature>
<feature type="topological domain" description="Cytoplasmic" evidence="2">
    <location>
        <begin position="1"/>
        <end position="10"/>
    </location>
</feature>
<feature type="transmembrane region" description="Helical" evidence="2">
    <location>
        <begin position="11"/>
        <end position="31"/>
    </location>
</feature>
<feature type="topological domain" description="Extracellular" evidence="2">
    <location>
        <begin position="32"/>
        <end position="52"/>
    </location>
</feature>
<feature type="transmembrane region" description="Helical" evidence="2">
    <location>
        <begin position="53"/>
        <end position="73"/>
    </location>
</feature>
<feature type="topological domain" description="Cytoplasmic" evidence="2">
    <location>
        <begin position="74"/>
        <end position="92"/>
    </location>
</feature>
<feature type="transmembrane region" description="Helical" evidence="2">
    <location>
        <begin position="93"/>
        <end position="113"/>
    </location>
</feature>
<feature type="topological domain" description="Extracellular" evidence="2">
    <location>
        <begin position="114"/>
        <end position="126"/>
    </location>
</feature>
<feature type="transmembrane region" description="Helical" evidence="2">
    <location>
        <begin position="127"/>
        <end position="147"/>
    </location>
</feature>
<feature type="topological domain" description="Cytoplasmic" evidence="2">
    <location>
        <begin position="148"/>
        <end position="159"/>
    </location>
</feature>
<feature type="transmembrane region" description="Helical" evidence="2">
    <location>
        <begin position="160"/>
        <end position="180"/>
    </location>
</feature>
<feature type="topological domain" description="Extracellular" evidence="2">
    <location>
        <begin position="181"/>
        <end position="187"/>
    </location>
</feature>
<feature type="transmembrane region" description="Helical" evidence="2">
    <location>
        <begin position="188"/>
        <end position="208"/>
    </location>
</feature>
<feature type="topological domain" description="Cytoplasmic" evidence="2">
    <location>
        <begin position="209"/>
        <end position="242"/>
    </location>
</feature>
<feature type="transmembrane region" description="Helical" evidence="2">
    <location>
        <begin position="243"/>
        <end position="263"/>
    </location>
</feature>
<feature type="topological domain" description="Extracellular" evidence="2">
    <location>
        <begin position="264"/>
        <end position="275"/>
    </location>
</feature>
<feature type="transmembrane region" description="Helical" evidence="2">
    <location>
        <begin position="276"/>
        <end position="296"/>
    </location>
</feature>
<feature type="topological domain" description="Cytoplasmic" evidence="2">
    <location>
        <begin position="297"/>
        <end position="313"/>
    </location>
</feature>
<feature type="transmembrane region" description="Helical" evidence="2">
    <location>
        <begin position="314"/>
        <end position="334"/>
    </location>
</feature>
<feature type="topological domain" description="Extracellular" evidence="2">
    <location>
        <begin position="335"/>
        <end position="349"/>
    </location>
</feature>
<feature type="transmembrane region" description="Helical" evidence="2">
    <location>
        <begin position="350"/>
        <end position="370"/>
    </location>
</feature>
<feature type="topological domain" description="Cytoplasmic" evidence="2">
    <location>
        <begin position="371"/>
        <end position="386"/>
    </location>
</feature>
<feature type="transmembrane region" description="Helical" evidence="2">
    <location>
        <begin position="387"/>
        <end position="407"/>
    </location>
</feature>
<feature type="topological domain" description="Extracellular" evidence="2">
    <location>
        <begin position="408"/>
        <end position="417"/>
    </location>
</feature>
<feature type="transmembrane region" description="Helical" evidence="2">
    <location>
        <begin position="418"/>
        <end position="438"/>
    </location>
</feature>
<feature type="topological domain" description="Cytoplasmic" evidence="2">
    <location>
        <begin position="439"/>
        <end position="457"/>
    </location>
</feature>
<accession>Q57PL1</accession>
<comment type="function">
    <text evidence="1">Multidrug efflux pump that functions probably as a Na(+)/drug antiporter.</text>
</comment>
<comment type="subcellular location">
    <subcellularLocation>
        <location evidence="1">Cell inner membrane</location>
        <topology evidence="1">Multi-pass membrane protein</topology>
    </subcellularLocation>
</comment>
<comment type="similarity">
    <text evidence="3">Belongs to the multi antimicrobial extrusion (MATE) (TC 2.A.66.1) family. MdtK subfamily.</text>
</comment>
<reference key="1">
    <citation type="journal article" date="2005" name="Nucleic Acids Res.">
        <title>The genome sequence of Salmonella enterica serovar Choleraesuis, a highly invasive and resistant zoonotic pathogen.</title>
        <authorList>
            <person name="Chiu C.-H."/>
            <person name="Tang P."/>
            <person name="Chu C."/>
            <person name="Hu S."/>
            <person name="Bao Q."/>
            <person name="Yu J."/>
            <person name="Chou Y.-Y."/>
            <person name="Wang H.-S."/>
            <person name="Lee Y.-S."/>
        </authorList>
    </citation>
    <scope>NUCLEOTIDE SEQUENCE [LARGE SCALE GENOMIC DNA]</scope>
    <source>
        <strain>SC-B67</strain>
    </source>
</reference>
<name>MDTK_SALCH</name>
<dbReference type="EMBL" id="AE017220">
    <property type="protein sequence ID" value="AAX65350.1"/>
    <property type="molecule type" value="Genomic_DNA"/>
</dbReference>
<dbReference type="RefSeq" id="WP_001175075.1">
    <property type="nucleotide sequence ID" value="NC_006905.1"/>
</dbReference>
<dbReference type="SMR" id="Q57PL1"/>
<dbReference type="KEGG" id="sec:SCH_1444"/>
<dbReference type="HOGENOM" id="CLU_012893_6_0_6"/>
<dbReference type="Proteomes" id="UP000000538">
    <property type="component" value="Chromosome"/>
</dbReference>
<dbReference type="GO" id="GO:0005886">
    <property type="term" value="C:plasma membrane"/>
    <property type="evidence" value="ECO:0007669"/>
    <property type="project" value="UniProtKB-SubCell"/>
</dbReference>
<dbReference type="GO" id="GO:0015297">
    <property type="term" value="F:antiporter activity"/>
    <property type="evidence" value="ECO:0007669"/>
    <property type="project" value="UniProtKB-UniRule"/>
</dbReference>
<dbReference type="GO" id="GO:0042910">
    <property type="term" value="F:xenobiotic transmembrane transporter activity"/>
    <property type="evidence" value="ECO:0007669"/>
    <property type="project" value="UniProtKB-UniRule"/>
</dbReference>
<dbReference type="GO" id="GO:0006814">
    <property type="term" value="P:sodium ion transport"/>
    <property type="evidence" value="ECO:0007669"/>
    <property type="project" value="UniProtKB-UniRule"/>
</dbReference>
<dbReference type="GO" id="GO:0006855">
    <property type="term" value="P:xenobiotic transmembrane transport"/>
    <property type="evidence" value="ECO:0007669"/>
    <property type="project" value="UniProtKB-UniRule"/>
</dbReference>
<dbReference type="CDD" id="cd13131">
    <property type="entry name" value="MATE_NorM_like"/>
    <property type="match status" value="1"/>
</dbReference>
<dbReference type="HAMAP" id="MF_00400">
    <property type="entry name" value="MdtK"/>
    <property type="match status" value="1"/>
</dbReference>
<dbReference type="InterPro" id="IPR002528">
    <property type="entry name" value="MATE_fam"/>
</dbReference>
<dbReference type="InterPro" id="IPR050222">
    <property type="entry name" value="MATE_MdtK"/>
</dbReference>
<dbReference type="InterPro" id="IPR048279">
    <property type="entry name" value="MdtK-like"/>
</dbReference>
<dbReference type="InterPro" id="IPR022913">
    <property type="entry name" value="Multidrug-R_MdtK"/>
</dbReference>
<dbReference type="NCBIfam" id="TIGR00797">
    <property type="entry name" value="matE"/>
    <property type="match status" value="1"/>
</dbReference>
<dbReference type="PANTHER" id="PTHR43298:SF2">
    <property type="entry name" value="FMN_FAD EXPORTER YEEO-RELATED"/>
    <property type="match status" value="1"/>
</dbReference>
<dbReference type="PANTHER" id="PTHR43298">
    <property type="entry name" value="MULTIDRUG RESISTANCE PROTEIN NORM-RELATED"/>
    <property type="match status" value="1"/>
</dbReference>
<dbReference type="Pfam" id="PF01554">
    <property type="entry name" value="MatE"/>
    <property type="match status" value="2"/>
</dbReference>
<dbReference type="PIRSF" id="PIRSF006603">
    <property type="entry name" value="DinF"/>
    <property type="match status" value="1"/>
</dbReference>
<evidence type="ECO:0000250" key="1"/>
<evidence type="ECO:0000255" key="2"/>
<evidence type="ECO:0000305" key="3"/>
<proteinExistence type="inferred from homology"/>